<sequence>MLLSGGDPPAQEWFMVQTKSKPRVQRQRLQVQRIFRVKLNAFQSRPDTPYFWLQLEGPRENMGKAKEYLKGLCSPELWKEVRYPPILHCAFLGAQGLFLDCLCWSTLAYLVPGPPGSLMVGGLTESFIMTQNWLEELVGRLRWGPAPLLTPRGIWEAEVTRAFGALVWIRGDQHAGDLLQLPPAVQELLLSLVRDAAGKEDIIEWLSRFGISDSHSDPEVLICPPQQQKEAPAMVSVGESPGPFVDMGTLQNRGPENSKRLSSLGATGSLITAQSTPQEAANQLVRVGSNNQDGMDSAQEEGTVQATSSQDSTNHTQALLKQRQVQKIEDKLLFQPPVSALGVCPPWKAWTPGPAFGPLWPGAIAATFWRINELHSLHLAWLLSQACFNFPFWQRPLGPIQLKLPGQNPLPLNLEWKQKELAPLPSAESPAGRPDGGLGGEAALQNCPRPEISPKVTSLLVVPGSSDVKDKVSSDLPQIGPPLTSTPQLQAGGEPGDQGSMQLDFKGLEEGPAPVLPTGQGKPVAQGGLTDQSVPGAQTVPETLKVPMAAAVPKAENPSRTQVPSAAPKLPTSRMMLAVHTEPAAPEVPLAPTKPTAQLMATAQKTVVNQPVLVAQVEPTTPKTPQAQKMPVAKTSPAGPKTPKAQAGPAATVSKAPAASKAPAAPKVPVTPRVSRAPKTPAAQKVPTDAGPTLDVARLLSEVQPTSRASVSLLKGQGQAGRQGPQSSGTLALSSKHQFQMEGLLGAWEGAPRQPPRHLQANSTVTSFQRYHEALNTPFELNLSGEPGNQGLRRVVIDGSSVAMVHGLQHFFSCRGIAMAVQFFWNRGHREVTVFVPTWQLKKNRRVRESHFLTKLHSLKMLSITPSQLENGKKITTYDYRFMVKLAEETDGIIVTNEQIHILMNSSKKLMVKDRLLPFTFAGNLFMVPDDPLGRDGPTLDEFLKKPNRLDTDIGNFLKVWKTLPPSSASVTELSDDADSGPLESLPNMEEVREEKEERQDEEQRQGQGTQKAAEEDDLDSSLASVFRVECPSLSEEILRCLSLHDPPDGALDIDLLPGAASPYLGIPWDGKAPCQQVLAHLAQLTIPSNFTALSFFMGFMDSHRDAIPDYEALVGPLHSLLKQKPDWQWDQEHEEAFLALKRALVSALCLMAPNSQLPFRLEVTVSHVALTAILHQEHSGRKHPIAYTSKPLLPDEESQGPQSGGDSPYAVAWALKHFSRCIGDTPVVLDLSYASRTTADPEVREGRRVSKAWLIRWSLLVQDKGKRALELALLQGLLGENRLLTPAASMPRFFQVLPPFSDLSTFVCIHMSGYCFYREDEWCAGFGLYVLSPTSPPVSLSFSCSPYTPTYAHLAAVACGLERFGQSPLPVVFLTHCNWIFSLLWELLPLWRARGFLSSDGAPLPHPSLLSYIISLTSGLSSLPFIYRTSYRGSLFAVTVDTLAKQGAQGGGQWWSLPKDVPAPTVSPHAMGKRPNLLALQLSDSTLADIIARLQAGQKLSGSSPFSSAFNSLSLDKESGLLMFKGDKKPRVWVVPTQLRRDLIFSVHDIPLGAHQRPEETYKKLRLLGWWPGMQEHVKDYCRSCLFCIPRNLIGSELKVIESPWPLRSTAPWSNLQIEVVGPVTISEEGHKHVLIVADPNTRWVEAFPLKPYTHTAVAQVLLQHVFARWGVPVRLEAAQGPQFARHVLVSCGLALGAQVASLSRDLQFPCLTSSGAYWEFKRALKEFIFLHGKKWAASLPLLHLAFRASSTDATPFKVLTGGESRLTEPLWWEMSSANIEGLKMDVFLLQLVGELLELHWRVADKASEKAENRRFKRESQEKEWNVGDQVLLLSLPRNGSSAKWVGPFYIGDRLSLSLYRIWGFPTPEKLGCIYPSSLMKAFAKSGTPLSFKVLEQ</sequence>
<protein>
    <recommendedName>
        <fullName>Protein NYNRIN</fullName>
    </recommendedName>
    <alternativeName>
        <fullName>NYN domain and retroviral integrase catalytic domain-containing protein</fullName>
    </alternativeName>
    <alternativeName>
        <fullName>Protein cousin of GIN1</fullName>
    </alternativeName>
</protein>
<gene>
    <name type="primary">NYNRIN</name>
    <name type="synonym">CGIN1</name>
    <name type="synonym">KIAA1305</name>
</gene>
<evidence type="ECO:0000255" key="1"/>
<evidence type="ECO:0000255" key="2">
    <source>
        <dbReference type="PROSITE-ProRule" id="PRU00408"/>
    </source>
</evidence>
<evidence type="ECO:0000255" key="3">
    <source>
        <dbReference type="PROSITE-ProRule" id="PRU00457"/>
    </source>
</evidence>
<evidence type="ECO:0000256" key="4">
    <source>
        <dbReference type="SAM" id="MobiDB-lite"/>
    </source>
</evidence>
<evidence type="ECO:0000303" key="5">
    <source>
    </source>
</evidence>
<evidence type="ECO:0000305" key="6"/>
<keyword id="KW-0025">Alternative splicing</keyword>
<keyword id="KW-0472">Membrane</keyword>
<keyword id="KW-1267">Proteomics identification</keyword>
<keyword id="KW-1185">Reference proteome</keyword>
<keyword id="KW-0812">Transmembrane</keyword>
<keyword id="KW-1133">Transmembrane helix</keyword>
<proteinExistence type="evidence at protein level"/>
<organism>
    <name type="scientific">Homo sapiens</name>
    <name type="common">Human</name>
    <dbReference type="NCBI Taxonomy" id="9606"/>
    <lineage>
        <taxon>Eukaryota</taxon>
        <taxon>Metazoa</taxon>
        <taxon>Chordata</taxon>
        <taxon>Craniata</taxon>
        <taxon>Vertebrata</taxon>
        <taxon>Euteleostomi</taxon>
        <taxon>Mammalia</taxon>
        <taxon>Eutheria</taxon>
        <taxon>Euarchontoglires</taxon>
        <taxon>Primates</taxon>
        <taxon>Haplorrhini</taxon>
        <taxon>Catarrhini</taxon>
        <taxon>Hominidae</taxon>
        <taxon>Homo</taxon>
    </lineage>
</organism>
<dbReference type="EMBL" id="AK021873">
    <property type="protein sequence ID" value="BAB13925.1"/>
    <property type="molecule type" value="mRNA"/>
</dbReference>
<dbReference type="EMBL" id="AL132800">
    <property type="status" value="NOT_ANNOTATED_CDS"/>
    <property type="molecule type" value="Genomic_DNA"/>
</dbReference>
<dbReference type="EMBL" id="BC065283">
    <property type="protein sequence ID" value="AAH65283.1"/>
    <property type="status" value="ALT_SEQ"/>
    <property type="molecule type" value="mRNA"/>
</dbReference>
<dbReference type="EMBL" id="AB037726">
    <property type="protein sequence ID" value="BAA92543.2"/>
    <property type="molecule type" value="mRNA"/>
</dbReference>
<dbReference type="EMBL" id="BX248773">
    <property type="protein sequence ID" value="CAD66580.1"/>
    <property type="molecule type" value="mRNA"/>
</dbReference>
<dbReference type="CCDS" id="CCDS45090.1">
    <molecule id="Q9P2P1-1"/>
</dbReference>
<dbReference type="RefSeq" id="NP_079357.2">
    <molecule id="Q9P2P1-1"/>
    <property type="nucleotide sequence ID" value="NM_025081.2"/>
</dbReference>
<dbReference type="BioGRID" id="121584">
    <property type="interactions" value="31"/>
</dbReference>
<dbReference type="FunCoup" id="Q9P2P1">
    <property type="interactions" value="118"/>
</dbReference>
<dbReference type="IntAct" id="Q9P2P1">
    <property type="interactions" value="11"/>
</dbReference>
<dbReference type="STRING" id="9606.ENSP00000371994"/>
<dbReference type="GlyGen" id="Q9P2P1">
    <property type="glycosylation" value="2 sites, 1 O-linked glycan (1 site)"/>
</dbReference>
<dbReference type="iPTMnet" id="Q9P2P1"/>
<dbReference type="PhosphoSitePlus" id="Q9P2P1"/>
<dbReference type="BioMuta" id="NYNRIN"/>
<dbReference type="DMDM" id="166218833"/>
<dbReference type="jPOST" id="Q9P2P1"/>
<dbReference type="MassIVE" id="Q9P2P1"/>
<dbReference type="PaxDb" id="9606-ENSP00000371994"/>
<dbReference type="PeptideAtlas" id="Q9P2P1"/>
<dbReference type="ProteomicsDB" id="83872">
    <molecule id="Q9P2P1-1"/>
</dbReference>
<dbReference type="ProteomicsDB" id="83873">
    <molecule id="Q9P2P1-2"/>
</dbReference>
<dbReference type="Pumba" id="Q9P2P1"/>
<dbReference type="Antibodypedia" id="57476">
    <property type="antibodies" value="7 antibodies from 6 providers"/>
</dbReference>
<dbReference type="DNASU" id="57523"/>
<dbReference type="Ensembl" id="ENST00000382554.4">
    <molecule id="Q9P2P1-1"/>
    <property type="protein sequence ID" value="ENSP00000371994.3"/>
    <property type="gene ID" value="ENSG00000205978.6"/>
</dbReference>
<dbReference type="GeneID" id="57523"/>
<dbReference type="KEGG" id="hsa:57523"/>
<dbReference type="MANE-Select" id="ENST00000382554.4">
    <property type="protein sequence ID" value="ENSP00000371994.3"/>
    <property type="RefSeq nucleotide sequence ID" value="NM_025081.3"/>
    <property type="RefSeq protein sequence ID" value="NP_079357.2"/>
</dbReference>
<dbReference type="UCSC" id="uc001wpf.4">
    <molecule id="Q9P2P1-1"/>
    <property type="organism name" value="human"/>
</dbReference>
<dbReference type="AGR" id="HGNC:20165"/>
<dbReference type="CTD" id="57523"/>
<dbReference type="DisGeNET" id="57523"/>
<dbReference type="GeneCards" id="NYNRIN"/>
<dbReference type="HGNC" id="HGNC:20165">
    <property type="gene designation" value="NYNRIN"/>
</dbReference>
<dbReference type="HPA" id="ENSG00000205978">
    <property type="expression patterns" value="Low tissue specificity"/>
</dbReference>
<dbReference type="MalaCards" id="NYNRIN"/>
<dbReference type="MIM" id="620129">
    <property type="type" value="gene"/>
</dbReference>
<dbReference type="neXtProt" id="NX_Q9P2P1"/>
<dbReference type="OpenTargets" id="ENSG00000205978"/>
<dbReference type="PharmGKB" id="PA165479228"/>
<dbReference type="VEuPathDB" id="HostDB:ENSG00000205978"/>
<dbReference type="eggNOG" id="KOG0017">
    <property type="taxonomic scope" value="Eukaryota"/>
</dbReference>
<dbReference type="eggNOG" id="KOG3740">
    <property type="taxonomic scope" value="Eukaryota"/>
</dbReference>
<dbReference type="GeneTree" id="ENSGT00940000161519"/>
<dbReference type="HOGENOM" id="CLU_235862_0_0_1"/>
<dbReference type="InParanoid" id="Q9P2P1"/>
<dbReference type="OMA" id="PYTHMAV"/>
<dbReference type="OrthoDB" id="10047254at2759"/>
<dbReference type="PAN-GO" id="Q9P2P1">
    <property type="GO annotations" value="5 GO annotations based on evolutionary models"/>
</dbReference>
<dbReference type="PhylomeDB" id="Q9P2P1"/>
<dbReference type="TreeFam" id="TF351195"/>
<dbReference type="PathwayCommons" id="Q9P2P1"/>
<dbReference type="SignaLink" id="Q9P2P1"/>
<dbReference type="BioGRID-ORCS" id="57523">
    <property type="hits" value="20 hits in 1149 CRISPR screens"/>
</dbReference>
<dbReference type="GenomeRNAi" id="57523"/>
<dbReference type="Pharos" id="Q9P2P1">
    <property type="development level" value="Tdark"/>
</dbReference>
<dbReference type="PRO" id="PR:Q9P2P1"/>
<dbReference type="Proteomes" id="UP000005640">
    <property type="component" value="Chromosome 14"/>
</dbReference>
<dbReference type="RNAct" id="Q9P2P1">
    <property type="molecule type" value="protein"/>
</dbReference>
<dbReference type="Bgee" id="ENSG00000205978">
    <property type="expression patterns" value="Expressed in right hemisphere of cerebellum and 131 other cell types or tissues"/>
</dbReference>
<dbReference type="GO" id="GO:0036464">
    <property type="term" value="C:cytoplasmic ribonucleoprotein granule"/>
    <property type="evidence" value="ECO:0000318"/>
    <property type="project" value="GO_Central"/>
</dbReference>
<dbReference type="GO" id="GO:0016020">
    <property type="term" value="C:membrane"/>
    <property type="evidence" value="ECO:0007669"/>
    <property type="project" value="UniProtKB-SubCell"/>
</dbReference>
<dbReference type="GO" id="GO:0005634">
    <property type="term" value="C:nucleus"/>
    <property type="evidence" value="ECO:0000318"/>
    <property type="project" value="GO_Central"/>
</dbReference>
<dbReference type="GO" id="GO:0003729">
    <property type="term" value="F:mRNA binding"/>
    <property type="evidence" value="ECO:0000318"/>
    <property type="project" value="GO_Central"/>
</dbReference>
<dbReference type="GO" id="GO:0004521">
    <property type="term" value="F:RNA endonuclease activity"/>
    <property type="evidence" value="ECO:0000318"/>
    <property type="project" value="GO_Central"/>
</dbReference>
<dbReference type="GO" id="GO:0004523">
    <property type="term" value="F:RNA-DNA hybrid ribonuclease activity"/>
    <property type="evidence" value="ECO:0007669"/>
    <property type="project" value="InterPro"/>
</dbReference>
<dbReference type="GO" id="GO:0015074">
    <property type="term" value="P:DNA integration"/>
    <property type="evidence" value="ECO:0007669"/>
    <property type="project" value="InterPro"/>
</dbReference>
<dbReference type="GO" id="GO:0000731">
    <property type="term" value="P:DNA synthesis involved in DNA repair"/>
    <property type="evidence" value="ECO:0007669"/>
    <property type="project" value="UniProtKB-ARBA"/>
</dbReference>
<dbReference type="GO" id="GO:0006261">
    <property type="term" value="P:DNA-templated DNA replication"/>
    <property type="evidence" value="ECO:0007669"/>
    <property type="project" value="UniProtKB-ARBA"/>
</dbReference>
<dbReference type="CDD" id="cd09032">
    <property type="entry name" value="KH-I_N4BP1_like_rpt1"/>
    <property type="match status" value="1"/>
</dbReference>
<dbReference type="CDD" id="cd22477">
    <property type="entry name" value="KH-I_NYNRIN_like"/>
    <property type="match status" value="1"/>
</dbReference>
<dbReference type="CDD" id="cd18728">
    <property type="entry name" value="PIN_N4BP1-like"/>
    <property type="match status" value="1"/>
</dbReference>
<dbReference type="FunFam" id="3.40.50.11980:FF:000001">
    <property type="entry name" value="ZC3H12A isoform 1"/>
    <property type="match status" value="1"/>
</dbReference>
<dbReference type="Gene3D" id="1.10.340.70">
    <property type="match status" value="1"/>
</dbReference>
<dbReference type="Gene3D" id="3.10.20.370">
    <property type="match status" value="1"/>
</dbReference>
<dbReference type="Gene3D" id="3.30.70.270">
    <property type="match status" value="1"/>
</dbReference>
<dbReference type="Gene3D" id="3.40.50.11980">
    <property type="match status" value="1"/>
</dbReference>
<dbReference type="Gene3D" id="3.30.420.10">
    <property type="entry name" value="Ribonuclease H-like superfamily/Ribonuclease H"/>
    <property type="match status" value="2"/>
</dbReference>
<dbReference type="InterPro" id="IPR043502">
    <property type="entry name" value="DNA/RNA_pol_sf"/>
</dbReference>
<dbReference type="InterPro" id="IPR001584">
    <property type="entry name" value="Integrase_cat-core"/>
</dbReference>
<dbReference type="InterPro" id="IPR041588">
    <property type="entry name" value="Integrase_H2C2"/>
</dbReference>
<dbReference type="InterPro" id="IPR056629">
    <property type="entry name" value="KH_N4BP1_1st"/>
</dbReference>
<dbReference type="InterPro" id="IPR056630">
    <property type="entry name" value="KH_N4BP1_2nd"/>
</dbReference>
<dbReference type="InterPro" id="IPR043128">
    <property type="entry name" value="Rev_trsase/Diguanyl_cyclase"/>
</dbReference>
<dbReference type="InterPro" id="IPR021869">
    <property type="entry name" value="RNase_Zc3h12_NYN"/>
</dbReference>
<dbReference type="InterPro" id="IPR012337">
    <property type="entry name" value="RNaseH-like_sf"/>
</dbReference>
<dbReference type="InterPro" id="IPR002156">
    <property type="entry name" value="RNaseH_domain"/>
</dbReference>
<dbReference type="InterPro" id="IPR036397">
    <property type="entry name" value="RNaseH_sf"/>
</dbReference>
<dbReference type="InterPro" id="IPR041577">
    <property type="entry name" value="RT_RNaseH_2"/>
</dbReference>
<dbReference type="InterPro" id="IPR051101">
    <property type="entry name" value="ZC3H12/N4BP1_RNase_Reg"/>
</dbReference>
<dbReference type="PANTHER" id="PTHR12876">
    <property type="entry name" value="N4BP1-RELATED"/>
    <property type="match status" value="1"/>
</dbReference>
<dbReference type="PANTHER" id="PTHR12876:SF2">
    <property type="entry name" value="PROTEIN NYNRIN"/>
    <property type="match status" value="1"/>
</dbReference>
<dbReference type="Pfam" id="PF17921">
    <property type="entry name" value="Integrase_H2C2"/>
    <property type="match status" value="1"/>
</dbReference>
<dbReference type="Pfam" id="PF23050">
    <property type="entry name" value="KH_N4BP1_1st"/>
    <property type="match status" value="1"/>
</dbReference>
<dbReference type="Pfam" id="PF23052">
    <property type="entry name" value="KH_N4BP1_2nd"/>
    <property type="match status" value="1"/>
</dbReference>
<dbReference type="Pfam" id="PF11977">
    <property type="entry name" value="RNase_Zc3h12a"/>
    <property type="match status" value="1"/>
</dbReference>
<dbReference type="Pfam" id="PF17919">
    <property type="entry name" value="RT_RNaseH_2"/>
    <property type="match status" value="1"/>
</dbReference>
<dbReference type="SUPFAM" id="SSF56672">
    <property type="entry name" value="DNA/RNA polymerases"/>
    <property type="match status" value="1"/>
</dbReference>
<dbReference type="SUPFAM" id="SSF53098">
    <property type="entry name" value="Ribonuclease H-like"/>
    <property type="match status" value="2"/>
</dbReference>
<dbReference type="PROSITE" id="PS50994">
    <property type="entry name" value="INTEGRASE"/>
    <property type="match status" value="1"/>
</dbReference>
<dbReference type="PROSITE" id="PS50879">
    <property type="entry name" value="RNASE_H_1"/>
    <property type="match status" value="1"/>
</dbReference>
<feature type="chain" id="PRO_0000314174" description="Protein NYNRIN">
    <location>
        <begin position="1"/>
        <end position="1898"/>
    </location>
</feature>
<feature type="transmembrane region" description="Helical" evidence="1">
    <location>
        <begin position="1372"/>
        <end position="1392"/>
    </location>
</feature>
<feature type="transmembrane region" description="Helical" evidence="1">
    <location>
        <begin position="1408"/>
        <end position="1428"/>
    </location>
</feature>
<feature type="domain" description="RNase NYN" evidence="1">
    <location>
        <begin position="792"/>
        <end position="942"/>
    </location>
</feature>
<feature type="domain" description="RNase H type-1" evidence="2">
    <location>
        <begin position="1304"/>
        <end position="1450"/>
    </location>
</feature>
<feature type="domain" description="Integrase catalytic" evidence="3">
    <location>
        <begin position="1609"/>
        <end position="1774"/>
    </location>
</feature>
<feature type="region of interest" description="Disordered" evidence="4">
    <location>
        <begin position="289"/>
        <end position="315"/>
    </location>
</feature>
<feature type="region of interest" description="Disordered" evidence="4">
    <location>
        <begin position="424"/>
        <end position="450"/>
    </location>
</feature>
<feature type="region of interest" description="Disordered" evidence="4">
    <location>
        <begin position="467"/>
        <end position="533"/>
    </location>
</feature>
<feature type="region of interest" description="Disordered" evidence="4">
    <location>
        <begin position="618"/>
        <end position="691"/>
    </location>
</feature>
<feature type="region of interest" description="Disordered" evidence="4">
    <location>
        <begin position="711"/>
        <end position="731"/>
    </location>
</feature>
<feature type="region of interest" description="Disordered" evidence="4">
    <location>
        <begin position="968"/>
        <end position="1019"/>
    </location>
</feature>
<feature type="compositionally biased region" description="Polar residues" evidence="4">
    <location>
        <begin position="618"/>
        <end position="627"/>
    </location>
</feature>
<feature type="compositionally biased region" description="Low complexity" evidence="4">
    <location>
        <begin position="649"/>
        <end position="672"/>
    </location>
</feature>
<feature type="compositionally biased region" description="Basic and acidic residues" evidence="4">
    <location>
        <begin position="990"/>
        <end position="1005"/>
    </location>
</feature>
<feature type="splice variant" id="VSP_030237" description="In isoform 2." evidence="5">
    <location>
        <begin position="1"/>
        <end position="1471"/>
    </location>
</feature>
<feature type="splice variant" id="VSP_030238" description="In isoform 2." evidence="5">
    <original>WPLRSTAPWSNLQIEV</original>
    <variation>ASVLRGQGVCNRSGTR</variation>
    <location>
        <begin position="1606"/>
        <end position="1621"/>
    </location>
</feature>
<feature type="splice variant" id="VSP_030239" description="In isoform 2." evidence="5">
    <location>
        <begin position="1622"/>
        <end position="1898"/>
    </location>
</feature>
<feature type="sequence variant" id="VAR_037857" description="In dbSNP:rs12437434.">
    <original>T</original>
    <variation>M</variation>
    <location>
        <position position="457"/>
    </location>
</feature>
<feature type="sequence variant" id="VAR_037858" description="In dbSNP:rs8008203.">
    <original>A</original>
    <variation>V</variation>
    <location>
        <position position="659"/>
    </location>
</feature>
<feature type="sequence variant" id="VAR_037859" description="In dbSNP:rs8017377.">
    <original>A</original>
    <variation>T</variation>
    <location>
        <position position="978"/>
    </location>
</feature>
<feature type="sequence variant" id="VAR_037860" description="In dbSNP:rs3742518.">
    <original>E</original>
    <variation>K</variation>
    <location>
        <position position="997"/>
    </location>
</feature>
<feature type="sequence variant" id="VAR_037861" description="In dbSNP:rs17103672.">
    <original>I</original>
    <variation>V</variation>
    <location>
        <position position="1551"/>
    </location>
</feature>
<feature type="sequence conflict" description="In Ref. 1; BAB13925." evidence="6" ref="1">
    <original>R</original>
    <variation>G</variation>
    <location>
        <position position="1475"/>
    </location>
</feature>
<accession>Q9P2P1</accession>
<accession>Q6P153</accession>
<accession>Q86TR3</accession>
<accession>Q9HAC4</accession>
<comment type="subcellular location">
    <subcellularLocation>
        <location evidence="6">Membrane</location>
        <topology evidence="6">Multi-pass membrane protein</topology>
    </subcellularLocation>
</comment>
<comment type="alternative products">
    <event type="alternative splicing"/>
    <isoform>
        <id>Q9P2P1-1</id>
        <name>1</name>
        <sequence type="displayed"/>
    </isoform>
    <isoform>
        <id>Q9P2P1-2</id>
        <name>2</name>
        <sequence type="described" ref="VSP_030237 VSP_030238 VSP_030239"/>
    </isoform>
</comment>
<comment type="miscellaneous">
    <text>The gene encoding this protein may have arisen from the fusion of a cellular gene with retroviral sequences prior to the marsupial-eutherian split. Sequence and structural analyses suggest that the integrase catalytic domain is inactive.</text>
</comment>
<comment type="sequence caution" evidence="6">
    <conflict type="miscellaneous discrepancy">
        <sequence resource="EMBL-CDS" id="AAH65283"/>
    </conflict>
    <text>Contaminating sequence. Potential poly-A sequence.</text>
</comment>
<reference key="1">
    <citation type="journal article" date="2004" name="Nat. Genet.">
        <title>Complete sequencing and characterization of 21,243 full-length human cDNAs.</title>
        <authorList>
            <person name="Ota T."/>
            <person name="Suzuki Y."/>
            <person name="Nishikawa T."/>
            <person name="Otsuki T."/>
            <person name="Sugiyama T."/>
            <person name="Irie R."/>
            <person name="Wakamatsu A."/>
            <person name="Hayashi K."/>
            <person name="Sato H."/>
            <person name="Nagai K."/>
            <person name="Kimura K."/>
            <person name="Makita H."/>
            <person name="Sekine M."/>
            <person name="Obayashi M."/>
            <person name="Nishi T."/>
            <person name="Shibahara T."/>
            <person name="Tanaka T."/>
            <person name="Ishii S."/>
            <person name="Yamamoto J."/>
            <person name="Saito K."/>
            <person name="Kawai Y."/>
            <person name="Isono Y."/>
            <person name="Nakamura Y."/>
            <person name="Nagahari K."/>
            <person name="Murakami K."/>
            <person name="Yasuda T."/>
            <person name="Iwayanagi T."/>
            <person name="Wagatsuma M."/>
            <person name="Shiratori A."/>
            <person name="Sudo H."/>
            <person name="Hosoiri T."/>
            <person name="Kaku Y."/>
            <person name="Kodaira H."/>
            <person name="Kondo H."/>
            <person name="Sugawara M."/>
            <person name="Takahashi M."/>
            <person name="Kanda K."/>
            <person name="Yokoi T."/>
            <person name="Furuya T."/>
            <person name="Kikkawa E."/>
            <person name="Omura Y."/>
            <person name="Abe K."/>
            <person name="Kamihara K."/>
            <person name="Katsuta N."/>
            <person name="Sato K."/>
            <person name="Tanikawa M."/>
            <person name="Yamazaki M."/>
            <person name="Ninomiya K."/>
            <person name="Ishibashi T."/>
            <person name="Yamashita H."/>
            <person name="Murakawa K."/>
            <person name="Fujimori K."/>
            <person name="Tanai H."/>
            <person name="Kimata M."/>
            <person name="Watanabe M."/>
            <person name="Hiraoka S."/>
            <person name="Chiba Y."/>
            <person name="Ishida S."/>
            <person name="Ono Y."/>
            <person name="Takiguchi S."/>
            <person name="Watanabe S."/>
            <person name="Yosida M."/>
            <person name="Hotuta T."/>
            <person name="Kusano J."/>
            <person name="Kanehori K."/>
            <person name="Takahashi-Fujii A."/>
            <person name="Hara H."/>
            <person name="Tanase T.-O."/>
            <person name="Nomura Y."/>
            <person name="Togiya S."/>
            <person name="Komai F."/>
            <person name="Hara R."/>
            <person name="Takeuchi K."/>
            <person name="Arita M."/>
            <person name="Imose N."/>
            <person name="Musashino K."/>
            <person name="Yuuki H."/>
            <person name="Oshima A."/>
            <person name="Sasaki N."/>
            <person name="Aotsuka S."/>
            <person name="Yoshikawa Y."/>
            <person name="Matsunawa H."/>
            <person name="Ichihara T."/>
            <person name="Shiohata N."/>
            <person name="Sano S."/>
            <person name="Moriya S."/>
            <person name="Momiyama H."/>
            <person name="Satoh N."/>
            <person name="Takami S."/>
            <person name="Terashima Y."/>
            <person name="Suzuki O."/>
            <person name="Nakagawa S."/>
            <person name="Senoh A."/>
            <person name="Mizoguchi H."/>
            <person name="Goto Y."/>
            <person name="Shimizu F."/>
            <person name="Wakebe H."/>
            <person name="Hishigaki H."/>
            <person name="Watanabe T."/>
            <person name="Sugiyama A."/>
            <person name="Takemoto M."/>
            <person name="Kawakami B."/>
            <person name="Yamazaki M."/>
            <person name="Watanabe K."/>
            <person name="Kumagai A."/>
            <person name="Itakura S."/>
            <person name="Fukuzumi Y."/>
            <person name="Fujimori Y."/>
            <person name="Komiyama M."/>
            <person name="Tashiro H."/>
            <person name="Tanigami A."/>
            <person name="Fujiwara T."/>
            <person name="Ono T."/>
            <person name="Yamada K."/>
            <person name="Fujii Y."/>
            <person name="Ozaki K."/>
            <person name="Hirao M."/>
            <person name="Ohmori Y."/>
            <person name="Kawabata A."/>
            <person name="Hikiji T."/>
            <person name="Kobatake N."/>
            <person name="Inagaki H."/>
            <person name="Ikema Y."/>
            <person name="Okamoto S."/>
            <person name="Okitani R."/>
            <person name="Kawakami T."/>
            <person name="Noguchi S."/>
            <person name="Itoh T."/>
            <person name="Shigeta K."/>
            <person name="Senba T."/>
            <person name="Matsumura K."/>
            <person name="Nakajima Y."/>
            <person name="Mizuno T."/>
            <person name="Morinaga M."/>
            <person name="Sasaki M."/>
            <person name="Togashi T."/>
            <person name="Oyama M."/>
            <person name="Hata H."/>
            <person name="Watanabe M."/>
            <person name="Komatsu T."/>
            <person name="Mizushima-Sugano J."/>
            <person name="Satoh T."/>
            <person name="Shirai Y."/>
            <person name="Takahashi Y."/>
            <person name="Nakagawa K."/>
            <person name="Okumura K."/>
            <person name="Nagase T."/>
            <person name="Nomura N."/>
            <person name="Kikuchi H."/>
            <person name="Masuho Y."/>
            <person name="Yamashita R."/>
            <person name="Nakai K."/>
            <person name="Yada T."/>
            <person name="Nakamura Y."/>
            <person name="Ohara O."/>
            <person name="Isogai T."/>
            <person name="Sugano S."/>
        </authorList>
    </citation>
    <scope>NUCLEOTIDE SEQUENCE [LARGE SCALE MRNA] (ISOFORM 2)</scope>
    <source>
        <tissue>Embryo</tissue>
    </source>
</reference>
<reference key="2">
    <citation type="journal article" date="2003" name="Nature">
        <title>The DNA sequence and analysis of human chromosome 14.</title>
        <authorList>
            <person name="Heilig R."/>
            <person name="Eckenberg R."/>
            <person name="Petit J.-L."/>
            <person name="Fonknechten N."/>
            <person name="Da Silva C."/>
            <person name="Cattolico L."/>
            <person name="Levy M."/>
            <person name="Barbe V."/>
            <person name="De Berardinis V."/>
            <person name="Ureta-Vidal A."/>
            <person name="Pelletier E."/>
            <person name="Vico V."/>
            <person name="Anthouard V."/>
            <person name="Rowen L."/>
            <person name="Madan A."/>
            <person name="Qin S."/>
            <person name="Sun H."/>
            <person name="Du H."/>
            <person name="Pepin K."/>
            <person name="Artiguenave F."/>
            <person name="Robert C."/>
            <person name="Cruaud C."/>
            <person name="Bruels T."/>
            <person name="Jaillon O."/>
            <person name="Friedlander L."/>
            <person name="Samson G."/>
            <person name="Brottier P."/>
            <person name="Cure S."/>
            <person name="Segurens B."/>
            <person name="Aniere F."/>
            <person name="Samain S."/>
            <person name="Crespeau H."/>
            <person name="Abbasi N."/>
            <person name="Aiach N."/>
            <person name="Boscus D."/>
            <person name="Dickhoff R."/>
            <person name="Dors M."/>
            <person name="Dubois I."/>
            <person name="Friedman C."/>
            <person name="Gouyvenoux M."/>
            <person name="James R."/>
            <person name="Madan A."/>
            <person name="Mairey-Estrada B."/>
            <person name="Mangenot S."/>
            <person name="Martins N."/>
            <person name="Menard M."/>
            <person name="Oztas S."/>
            <person name="Ratcliffe A."/>
            <person name="Shaffer T."/>
            <person name="Trask B."/>
            <person name="Vacherie B."/>
            <person name="Bellemere C."/>
            <person name="Belser C."/>
            <person name="Besnard-Gonnet M."/>
            <person name="Bartol-Mavel D."/>
            <person name="Boutard M."/>
            <person name="Briez-Silla S."/>
            <person name="Combette S."/>
            <person name="Dufosse-Laurent V."/>
            <person name="Ferron C."/>
            <person name="Lechaplais C."/>
            <person name="Louesse C."/>
            <person name="Muselet D."/>
            <person name="Magdelenat G."/>
            <person name="Pateau E."/>
            <person name="Petit E."/>
            <person name="Sirvain-Trukniewicz P."/>
            <person name="Trybou A."/>
            <person name="Vega-Czarny N."/>
            <person name="Bataille E."/>
            <person name="Bluet E."/>
            <person name="Bordelais I."/>
            <person name="Dubois M."/>
            <person name="Dumont C."/>
            <person name="Guerin T."/>
            <person name="Haffray S."/>
            <person name="Hammadi R."/>
            <person name="Muanga J."/>
            <person name="Pellouin V."/>
            <person name="Robert D."/>
            <person name="Wunderle E."/>
            <person name="Gauguet G."/>
            <person name="Roy A."/>
            <person name="Sainte-Marthe L."/>
            <person name="Verdier J."/>
            <person name="Verdier-Discala C."/>
            <person name="Hillier L.W."/>
            <person name="Fulton L."/>
            <person name="McPherson J."/>
            <person name="Matsuda F."/>
            <person name="Wilson R."/>
            <person name="Scarpelli C."/>
            <person name="Gyapay G."/>
            <person name="Wincker P."/>
            <person name="Saurin W."/>
            <person name="Quetier F."/>
            <person name="Waterston R."/>
            <person name="Hood L."/>
            <person name="Weissenbach J."/>
        </authorList>
    </citation>
    <scope>NUCLEOTIDE SEQUENCE [LARGE SCALE GENOMIC DNA]</scope>
</reference>
<reference key="3">
    <citation type="journal article" date="2004" name="Genome Res.">
        <title>The status, quality, and expansion of the NIH full-length cDNA project: the Mammalian Gene Collection (MGC).</title>
        <authorList>
            <consortium name="The MGC Project Team"/>
        </authorList>
    </citation>
    <scope>NUCLEOTIDE SEQUENCE [LARGE SCALE MRNA] OF 1-487 (ISOFORM 1)</scope>
    <source>
        <tissue>Eye</tissue>
    </source>
</reference>
<reference key="4">
    <citation type="journal article" date="2000" name="DNA Res.">
        <title>Prediction of the coding sequences of unidentified human genes. XVI. The complete sequences of 150 new cDNA clones from brain which code for large proteins in vitro.</title>
        <authorList>
            <person name="Nagase T."/>
            <person name="Kikuno R."/>
            <person name="Ishikawa K."/>
            <person name="Hirosawa M."/>
            <person name="Ohara O."/>
        </authorList>
    </citation>
    <scope>NUCLEOTIDE SEQUENCE [LARGE SCALE MRNA] OF 80-1898 (ISOFORM 1)</scope>
    <source>
        <tissue>Brain</tissue>
    </source>
</reference>
<reference key="5">
    <citation type="journal article" date="2002" name="DNA Res.">
        <title>Construction of expression-ready cDNA clones for KIAA genes: manual curation of 330 KIAA cDNA clones.</title>
        <authorList>
            <person name="Nakajima D."/>
            <person name="Okazaki N."/>
            <person name="Yamakawa H."/>
            <person name="Kikuno R."/>
            <person name="Ohara O."/>
            <person name="Nagase T."/>
        </authorList>
    </citation>
    <scope>SEQUENCE REVISION</scope>
</reference>
<reference key="6">
    <citation type="submission" date="2003-02" db="EMBL/GenBank/DDBJ databases">
        <title>Full-length cDNA libraries and normalization.</title>
        <authorList>
            <person name="Li W.B."/>
            <person name="Gruber C."/>
            <person name="Jessee J."/>
            <person name="Polayes D."/>
        </authorList>
    </citation>
    <scope>NUCLEOTIDE SEQUENCE [LARGE SCALE MRNA] OF 226-731 (ISOFORM 1)</scope>
    <source>
        <tissue>Placenta</tissue>
    </source>
</reference>
<name>NYNRI_HUMAN</name>